<dbReference type="EMBL" id="U00096">
    <property type="protein sequence ID" value="AAC75660.2"/>
    <property type="molecule type" value="Genomic_DNA"/>
</dbReference>
<dbReference type="EMBL" id="AP009048">
    <property type="protein sequence ID" value="BAE76757.1"/>
    <property type="status" value="ALT_INIT"/>
    <property type="molecule type" value="Genomic_DNA"/>
</dbReference>
<dbReference type="PIR" id="F65039">
    <property type="entry name" value="F65039"/>
</dbReference>
<dbReference type="RefSeq" id="NP_417102.4">
    <property type="nucleotide sequence ID" value="NC_000913.3"/>
</dbReference>
<dbReference type="RefSeq" id="WP_001338897.1">
    <property type="nucleotide sequence ID" value="NZ_STEB01000040.1"/>
</dbReference>
<dbReference type="SMR" id="P64432"/>
<dbReference type="BioGRID" id="4260614">
    <property type="interactions" value="16"/>
</dbReference>
<dbReference type="FunCoup" id="P64432">
    <property type="interactions" value="91"/>
</dbReference>
<dbReference type="STRING" id="511145.b2611"/>
<dbReference type="TCDB" id="9.B.14.3.6">
    <property type="family name" value="the putative heme handling protein (hhp) family"/>
</dbReference>
<dbReference type="jPOST" id="P64432"/>
<dbReference type="PaxDb" id="511145-b2611"/>
<dbReference type="EnsemblBacteria" id="AAC75660">
    <property type="protein sequence ID" value="AAC75660"/>
    <property type="gene ID" value="b2611"/>
</dbReference>
<dbReference type="GeneID" id="947098"/>
<dbReference type="KEGG" id="ecj:JW2592"/>
<dbReference type="KEGG" id="eco:b2611"/>
<dbReference type="KEGG" id="ecoc:C3026_14455"/>
<dbReference type="PATRIC" id="fig|511145.12.peg.2709"/>
<dbReference type="EchoBASE" id="EB3978"/>
<dbReference type="eggNOG" id="COG4137">
    <property type="taxonomic scope" value="Bacteria"/>
</dbReference>
<dbReference type="HOGENOM" id="CLU_049710_1_2_6"/>
<dbReference type="InParanoid" id="P64432"/>
<dbReference type="OMA" id="EPGILAH"/>
<dbReference type="OrthoDB" id="9780793at2"/>
<dbReference type="PhylomeDB" id="P64432"/>
<dbReference type="BioCyc" id="EcoCyc:G7355-MONOMER"/>
<dbReference type="PRO" id="PR:P64432"/>
<dbReference type="Proteomes" id="UP000000625">
    <property type="component" value="Chromosome"/>
</dbReference>
<dbReference type="GO" id="GO:0005886">
    <property type="term" value="C:plasma membrane"/>
    <property type="evidence" value="ECO:0000314"/>
    <property type="project" value="EcoCyc"/>
</dbReference>
<dbReference type="GO" id="GO:0020037">
    <property type="term" value="F:heme binding"/>
    <property type="evidence" value="ECO:0007669"/>
    <property type="project" value="InterPro"/>
</dbReference>
<dbReference type="GO" id="GO:0017004">
    <property type="term" value="P:cytochrome complex assembly"/>
    <property type="evidence" value="ECO:0007669"/>
    <property type="project" value="InterPro"/>
</dbReference>
<dbReference type="InterPro" id="IPR002541">
    <property type="entry name" value="Cyt_c_assembly"/>
</dbReference>
<dbReference type="InterPro" id="IPR052372">
    <property type="entry name" value="YpjD/HemX"/>
</dbReference>
<dbReference type="PANTHER" id="PTHR38034">
    <property type="entry name" value="INNER MEMBRANE PROTEIN YPJD"/>
    <property type="match status" value="1"/>
</dbReference>
<dbReference type="PANTHER" id="PTHR38034:SF1">
    <property type="entry name" value="INNER MEMBRANE PROTEIN YPJD"/>
    <property type="match status" value="1"/>
</dbReference>
<dbReference type="Pfam" id="PF01578">
    <property type="entry name" value="Cytochrom_C_asm"/>
    <property type="match status" value="1"/>
</dbReference>
<keyword id="KW-0997">Cell inner membrane</keyword>
<keyword id="KW-1003">Cell membrane</keyword>
<keyword id="KW-0472">Membrane</keyword>
<keyword id="KW-1185">Reference proteome</keyword>
<keyword id="KW-0812">Transmembrane</keyword>
<keyword id="KW-1133">Transmembrane helix</keyword>
<feature type="chain" id="PRO_0000201343" description="Inner membrane protein YpjD">
    <location>
        <begin position="1"/>
        <end position="263"/>
    </location>
</feature>
<feature type="topological domain" description="Periplasmic" evidence="1">
    <location>
        <begin position="1"/>
        <end position="3"/>
    </location>
</feature>
<feature type="transmembrane region" description="Helical" evidence="1">
    <location>
        <begin position="4"/>
        <end position="23"/>
    </location>
</feature>
<feature type="topological domain" description="Cytoplasmic" evidence="1">
    <location>
        <begin position="24"/>
        <end position="34"/>
    </location>
</feature>
<feature type="transmembrane region" description="Helical" evidence="1">
    <location>
        <begin position="35"/>
        <end position="54"/>
    </location>
</feature>
<feature type="topological domain" description="Periplasmic" evidence="1">
    <location>
        <begin position="55"/>
        <end position="63"/>
    </location>
</feature>
<feature type="transmembrane region" description="Helical" evidence="1">
    <location>
        <begin position="64"/>
        <end position="83"/>
    </location>
</feature>
<feature type="topological domain" description="Cytoplasmic" evidence="1">
    <location>
        <begin position="84"/>
        <end position="89"/>
    </location>
</feature>
<feature type="transmembrane region" description="Helical" evidence="1">
    <location>
        <begin position="90"/>
        <end position="109"/>
    </location>
</feature>
<feature type="topological domain" description="Periplasmic" evidence="1">
    <location>
        <begin position="110"/>
        <end position="123"/>
    </location>
</feature>
<feature type="transmembrane region" description="Helical" evidence="1">
    <location>
        <begin position="124"/>
        <end position="146"/>
    </location>
</feature>
<feature type="topological domain" description="Cytoplasmic" evidence="1">
    <location>
        <begin position="147"/>
        <end position="181"/>
    </location>
</feature>
<feature type="transmembrane region" description="Helical" evidence="1">
    <location>
        <begin position="182"/>
        <end position="201"/>
    </location>
</feature>
<feature type="topological domain" description="Periplasmic" evidence="1">
    <location>
        <begin position="202"/>
        <end position="210"/>
    </location>
</feature>
<feature type="transmembrane region" description="Helical" evidence="1">
    <location>
        <begin position="211"/>
        <end position="228"/>
    </location>
</feature>
<feature type="topological domain" description="Cytoplasmic" evidence="1">
    <location>
        <begin position="229"/>
        <end position="236"/>
    </location>
</feature>
<feature type="transmembrane region" description="Helical" evidence="1">
    <location>
        <begin position="237"/>
        <end position="259"/>
    </location>
</feature>
<feature type="topological domain" description="Periplasmic" evidence="1">
    <location>
        <begin position="260"/>
        <end position="263"/>
    </location>
</feature>
<accession>P64432</accession>
<accession>P76599</accession>
<accession>Q2MAE9</accession>
<comment type="subcellular location">
    <subcellularLocation>
        <location>Cell inner membrane</location>
        <topology>Multi-pass membrane protein</topology>
    </subcellularLocation>
</comment>
<comment type="sequence caution" evidence="2">
    <conflict type="erroneous initiation">
        <sequence resource="EMBL-CDS" id="BAE76757"/>
    </conflict>
</comment>
<organism>
    <name type="scientific">Escherichia coli (strain K12)</name>
    <dbReference type="NCBI Taxonomy" id="83333"/>
    <lineage>
        <taxon>Bacteria</taxon>
        <taxon>Pseudomonadati</taxon>
        <taxon>Pseudomonadota</taxon>
        <taxon>Gammaproteobacteria</taxon>
        <taxon>Enterobacterales</taxon>
        <taxon>Enterobacteriaceae</taxon>
        <taxon>Escherichia</taxon>
    </lineage>
</organism>
<reference key="1">
    <citation type="journal article" date="1997" name="Science">
        <title>The complete genome sequence of Escherichia coli K-12.</title>
        <authorList>
            <person name="Blattner F.R."/>
            <person name="Plunkett G. III"/>
            <person name="Bloch C.A."/>
            <person name="Perna N.T."/>
            <person name="Burland V."/>
            <person name="Riley M."/>
            <person name="Collado-Vides J."/>
            <person name="Glasner J.D."/>
            <person name="Rode C.K."/>
            <person name="Mayhew G.F."/>
            <person name="Gregor J."/>
            <person name="Davis N.W."/>
            <person name="Kirkpatrick H.A."/>
            <person name="Goeden M.A."/>
            <person name="Rose D.J."/>
            <person name="Mau B."/>
            <person name="Shao Y."/>
        </authorList>
    </citation>
    <scope>NUCLEOTIDE SEQUENCE [LARGE SCALE GENOMIC DNA]</scope>
    <source>
        <strain>K12 / MG1655 / ATCC 47076</strain>
    </source>
</reference>
<reference key="2">
    <citation type="journal article" date="2006" name="Mol. Syst. Biol.">
        <title>Highly accurate genome sequences of Escherichia coli K-12 strains MG1655 and W3110.</title>
        <authorList>
            <person name="Hayashi K."/>
            <person name="Morooka N."/>
            <person name="Yamamoto Y."/>
            <person name="Fujita K."/>
            <person name="Isono K."/>
            <person name="Choi S."/>
            <person name="Ohtsubo E."/>
            <person name="Baba T."/>
            <person name="Wanner B.L."/>
            <person name="Mori H."/>
            <person name="Horiuchi T."/>
        </authorList>
    </citation>
    <scope>NUCLEOTIDE SEQUENCE [LARGE SCALE GENOMIC DNA]</scope>
    <source>
        <strain>K12 / W3110 / ATCC 27325 / DSM 5911</strain>
    </source>
</reference>
<reference key="3">
    <citation type="journal article" date="2005" name="Science">
        <title>Global topology analysis of the Escherichia coli inner membrane proteome.</title>
        <authorList>
            <person name="Daley D.O."/>
            <person name="Rapp M."/>
            <person name="Granseth E."/>
            <person name="Melen K."/>
            <person name="Drew D."/>
            <person name="von Heijne G."/>
        </authorList>
    </citation>
    <scope>TOPOLOGY [LARGE SCALE ANALYSIS]</scope>
    <source>
        <strain>K12 / MG1655 / ATCC 47076</strain>
    </source>
</reference>
<gene>
    <name type="primary">ypjD</name>
    <name type="ordered locus">b2611</name>
    <name type="ordered locus">JW2592</name>
</gene>
<evidence type="ECO:0000255" key="1"/>
<evidence type="ECO:0000305" key="2"/>
<sequence>MPVFALLALVAYSVSLALIVPGLLQKNGGWRRMAIISAVIALVCHAIALEARILPDGDSGQNLSLLNVGSLVSLMICTVMTIVASRNRGWLLLPIVYAFALINLALATFMPNEYITHLEATPGMLVHIGLSLFSYATLIIAALYALQLAWIDYQLKNKKLAFNQEMPPLMSIERKMFHITQIGVVLLTLTLCTGLFYMHNLFSMENIDKAVLSIVAWFVYIVLLWGHYHEGWRGRRVVWFNVAGAVILTLAYFGSRIVQQLIS</sequence>
<protein>
    <recommendedName>
        <fullName>Inner membrane protein YpjD</fullName>
    </recommendedName>
</protein>
<proteinExistence type="evidence at protein level"/>
<name>YPJD_ECOLI</name>